<gene>
    <name evidence="1" type="primary">rplE</name>
    <name type="ordered locus">llmg_2371</name>
</gene>
<reference key="1">
    <citation type="journal article" date="2007" name="J. Bacteriol.">
        <title>The complete genome sequence of the lactic acid bacterial paradigm Lactococcus lactis subsp. cremoris MG1363.</title>
        <authorList>
            <person name="Wegmann U."/>
            <person name="O'Connell-Motherway M."/>
            <person name="Zomer A."/>
            <person name="Buist G."/>
            <person name="Shearman C."/>
            <person name="Canchaya C."/>
            <person name="Ventura M."/>
            <person name="Goesmann A."/>
            <person name="Gasson M.J."/>
            <person name="Kuipers O.P."/>
            <person name="van Sinderen D."/>
            <person name="Kok J."/>
        </authorList>
    </citation>
    <scope>NUCLEOTIDE SEQUENCE [LARGE SCALE GENOMIC DNA]</scope>
    <source>
        <strain>MG1363</strain>
    </source>
</reference>
<evidence type="ECO:0000255" key="1">
    <source>
        <dbReference type="HAMAP-Rule" id="MF_01333"/>
    </source>
</evidence>
<evidence type="ECO:0000305" key="2"/>
<sequence length="180" mass="20006">MTNRLKEKYTNEVVPALTEQFNYTSIMAVPKVDKIVINMGVGDAVNNSKNLDKAVAELALISGQKPLITKAKKSVAAFRLREGMPIGAKVTLRGERMFEFLDKLVTVSLPRVRDFHGVSNKAFDGRGNYTLGVKEQLIFPEINYDDVDKVRGMDIVIVTTANTDEESRELLAKLGMPFAK</sequence>
<protein>
    <recommendedName>
        <fullName evidence="1">Large ribosomal subunit protein uL5</fullName>
    </recommendedName>
    <alternativeName>
        <fullName evidence="2">50S ribosomal protein L5</fullName>
    </alternativeName>
</protein>
<dbReference type="EMBL" id="AM406671">
    <property type="protein sequence ID" value="CAL98934.1"/>
    <property type="molecule type" value="Genomic_DNA"/>
</dbReference>
<dbReference type="RefSeq" id="WP_003129948.1">
    <property type="nucleotide sequence ID" value="NZ_WJVF01000005.1"/>
</dbReference>
<dbReference type="PDB" id="5MYJ">
    <property type="method" value="EM"/>
    <property type="resolution" value="5.60 A"/>
    <property type="chains" value="BG=1-180"/>
</dbReference>
<dbReference type="PDBsum" id="5MYJ"/>
<dbReference type="EMDB" id="EMD-3581"/>
<dbReference type="SMR" id="A2RNP3"/>
<dbReference type="STRING" id="416870.llmg_2371"/>
<dbReference type="GeneID" id="89634434"/>
<dbReference type="KEGG" id="llm:llmg_2371"/>
<dbReference type="eggNOG" id="COG0094">
    <property type="taxonomic scope" value="Bacteria"/>
</dbReference>
<dbReference type="HOGENOM" id="CLU_061015_2_1_9"/>
<dbReference type="OrthoDB" id="9806626at2"/>
<dbReference type="PhylomeDB" id="A2RNP3"/>
<dbReference type="Proteomes" id="UP000000364">
    <property type="component" value="Chromosome"/>
</dbReference>
<dbReference type="GO" id="GO:1990904">
    <property type="term" value="C:ribonucleoprotein complex"/>
    <property type="evidence" value="ECO:0007669"/>
    <property type="project" value="UniProtKB-KW"/>
</dbReference>
<dbReference type="GO" id="GO:0005840">
    <property type="term" value="C:ribosome"/>
    <property type="evidence" value="ECO:0007669"/>
    <property type="project" value="UniProtKB-KW"/>
</dbReference>
<dbReference type="GO" id="GO:0019843">
    <property type="term" value="F:rRNA binding"/>
    <property type="evidence" value="ECO:0007669"/>
    <property type="project" value="UniProtKB-UniRule"/>
</dbReference>
<dbReference type="GO" id="GO:0003735">
    <property type="term" value="F:structural constituent of ribosome"/>
    <property type="evidence" value="ECO:0007669"/>
    <property type="project" value="InterPro"/>
</dbReference>
<dbReference type="GO" id="GO:0000049">
    <property type="term" value="F:tRNA binding"/>
    <property type="evidence" value="ECO:0007669"/>
    <property type="project" value="UniProtKB-UniRule"/>
</dbReference>
<dbReference type="GO" id="GO:0006412">
    <property type="term" value="P:translation"/>
    <property type="evidence" value="ECO:0007669"/>
    <property type="project" value="UniProtKB-UniRule"/>
</dbReference>
<dbReference type="FunFam" id="3.30.1440.10:FF:000001">
    <property type="entry name" value="50S ribosomal protein L5"/>
    <property type="match status" value="1"/>
</dbReference>
<dbReference type="Gene3D" id="3.30.1440.10">
    <property type="match status" value="1"/>
</dbReference>
<dbReference type="HAMAP" id="MF_01333_B">
    <property type="entry name" value="Ribosomal_uL5_B"/>
    <property type="match status" value="1"/>
</dbReference>
<dbReference type="InterPro" id="IPR002132">
    <property type="entry name" value="Ribosomal_uL5"/>
</dbReference>
<dbReference type="InterPro" id="IPR020930">
    <property type="entry name" value="Ribosomal_uL5_bac-type"/>
</dbReference>
<dbReference type="InterPro" id="IPR031309">
    <property type="entry name" value="Ribosomal_uL5_C"/>
</dbReference>
<dbReference type="InterPro" id="IPR020929">
    <property type="entry name" value="Ribosomal_uL5_CS"/>
</dbReference>
<dbReference type="InterPro" id="IPR022803">
    <property type="entry name" value="Ribosomal_uL5_dom_sf"/>
</dbReference>
<dbReference type="InterPro" id="IPR031310">
    <property type="entry name" value="Ribosomal_uL5_N"/>
</dbReference>
<dbReference type="NCBIfam" id="NF000585">
    <property type="entry name" value="PRK00010.1"/>
    <property type="match status" value="1"/>
</dbReference>
<dbReference type="PANTHER" id="PTHR11994">
    <property type="entry name" value="60S RIBOSOMAL PROTEIN L11-RELATED"/>
    <property type="match status" value="1"/>
</dbReference>
<dbReference type="Pfam" id="PF00281">
    <property type="entry name" value="Ribosomal_L5"/>
    <property type="match status" value="1"/>
</dbReference>
<dbReference type="Pfam" id="PF00673">
    <property type="entry name" value="Ribosomal_L5_C"/>
    <property type="match status" value="1"/>
</dbReference>
<dbReference type="PIRSF" id="PIRSF002161">
    <property type="entry name" value="Ribosomal_L5"/>
    <property type="match status" value="1"/>
</dbReference>
<dbReference type="SUPFAM" id="SSF55282">
    <property type="entry name" value="RL5-like"/>
    <property type="match status" value="1"/>
</dbReference>
<dbReference type="PROSITE" id="PS00358">
    <property type="entry name" value="RIBOSOMAL_L5"/>
    <property type="match status" value="1"/>
</dbReference>
<accession>A2RNP3</accession>
<name>RL5_LACLM</name>
<comment type="function">
    <text evidence="1">This is one of the proteins that bind and probably mediate the attachment of the 5S RNA into the large ribosomal subunit, where it forms part of the central protuberance. In the 70S ribosome it contacts protein S13 of the 30S subunit (bridge B1b), connecting the 2 subunits; this bridge is implicated in subunit movement. Contacts the P site tRNA; the 5S rRNA and some of its associated proteins might help stabilize positioning of ribosome-bound tRNAs.</text>
</comment>
<comment type="subunit">
    <text evidence="1">Part of the 50S ribosomal subunit; part of the 5S rRNA/L5/L18/L25 subcomplex. Contacts the 5S rRNA and the P site tRNA. Forms a bridge to the 30S subunit in the 70S ribosome.</text>
</comment>
<comment type="similarity">
    <text evidence="1">Belongs to the universal ribosomal protein uL5 family.</text>
</comment>
<proteinExistence type="evidence at protein level"/>
<organism>
    <name type="scientific">Lactococcus lactis subsp. cremoris (strain MG1363)</name>
    <dbReference type="NCBI Taxonomy" id="416870"/>
    <lineage>
        <taxon>Bacteria</taxon>
        <taxon>Bacillati</taxon>
        <taxon>Bacillota</taxon>
        <taxon>Bacilli</taxon>
        <taxon>Lactobacillales</taxon>
        <taxon>Streptococcaceae</taxon>
        <taxon>Lactococcus</taxon>
        <taxon>Lactococcus cremoris subsp. cremoris</taxon>
    </lineage>
</organism>
<keyword id="KW-0002">3D-structure</keyword>
<keyword id="KW-0687">Ribonucleoprotein</keyword>
<keyword id="KW-0689">Ribosomal protein</keyword>
<keyword id="KW-0694">RNA-binding</keyword>
<keyword id="KW-0699">rRNA-binding</keyword>
<keyword id="KW-0820">tRNA-binding</keyword>
<feature type="chain" id="PRO_1000052757" description="Large ribosomal subunit protein uL5">
    <location>
        <begin position="1"/>
        <end position="180"/>
    </location>
</feature>